<accession>B9DGT7</accession>
<accession>P29510</accession>
<comment type="function">
    <text>Tubulin is the major constituent of microtubules, a cylinder consisting of laterally associated linear protofilaments composed of alpha- and beta-tubulin heterodimers. Microtubules grow by the addition of GTP-tubulin dimers to the microtubule end, where a stabilizing cap forms. Below the cap, tubulin dimers are in GDP-bound state, owing to GTPase activity of alpha-tubulin.</text>
</comment>
<comment type="catalytic activity">
    <reaction evidence="2">
        <text>GTP + H2O = GDP + phosphate + H(+)</text>
        <dbReference type="Rhea" id="RHEA:19669"/>
        <dbReference type="ChEBI" id="CHEBI:15377"/>
        <dbReference type="ChEBI" id="CHEBI:15378"/>
        <dbReference type="ChEBI" id="CHEBI:37565"/>
        <dbReference type="ChEBI" id="CHEBI:43474"/>
        <dbReference type="ChEBI" id="CHEBI:58189"/>
    </reaction>
    <physiologicalReaction direction="left-to-right" evidence="2">
        <dbReference type="Rhea" id="RHEA:19670"/>
    </physiologicalReaction>
</comment>
<comment type="cofactor">
    <cofactor evidence="2">
        <name>Mg(2+)</name>
        <dbReference type="ChEBI" id="CHEBI:18420"/>
    </cofactor>
</comment>
<comment type="subunit">
    <text>Dimer of alpha and beta chains. A typical microtubule is a hollow water-filled tube with an outer diameter of 25 nm and an inner diameter of 15 nM. Alpha-beta heterodimers associate head-to-tail to form protofilaments running lengthwise along the microtubule wall with the beta-tubulin subunit facing the microtubule plus end conferring a structural polarity. Microtubules usually have 13 protofilaments but different protofilament numbers can be found in some organisms and specialized cells.</text>
</comment>
<comment type="subcellular location">
    <subcellularLocation>
        <location>Cytoplasm</location>
        <location>Cytoskeleton</location>
    </subcellularLocation>
</comment>
<comment type="PTM">
    <text evidence="1">Undergoes a tyrosination/detyrosination cycle, the cyclic removal and re-addition of a C-terminal tyrosine residue by the enzymes tubulin tyrosine carboxypeptidase (TTCP) and tubulin tyrosine ligase (TTL), respectively.</text>
</comment>
<comment type="PTM">
    <text evidence="1">Acetylation of alpha chains at Lys-40 stabilizes microtubules and affects affinity and processivity of microtubule motors. This modification has a role in multiple cellular functions, ranging from cell motility, cell cycle progression or cell differentiation to intracellular trafficking and signaling (By similarity).</text>
</comment>
<comment type="miscellaneous">
    <text>There are six genes coding for alpha-tubulin. The sequences coded by genes 2 and 4 are identical.</text>
</comment>
<comment type="similarity">
    <text evidence="5">Belongs to the tubulin family.</text>
</comment>
<sequence>MRECISIHIGQAGIQVGNACWELYCLEHGIQPDGQMPSDKTVGGGDDAFNTFFSETGAGKHVPRAVFVDLEPTVIDEVRTGTYRQLFHPEQLISGKEDAANNFARGHYTIGKEIVDLCLDRIRKLADNCTGLQGFLVFNAVGGGTGSGLGSLLLERLSVDYGKKSKLGFTVYPSPQVSTSVVEPYNSVLSTHSLLEHTDVSILLDNEAIYDICRRSLSIERPTYTNLNRLVSQVISSLTASLRFDGALNVDVTEFQTNLVPYPRIHFMLSSYAPVISAEKAFHEQLSVAEITNSAFEPASMMAKCDPRHGKYMACCLMYRGDVVPKDVNAAVGTIKTKRTIQFVDWCPTGFKCGINYQPPTVVPGGDLAKVQRAVCMISNSTSVAEVFSRIDHKFDLMYAKRAFVHWYVGEGMEEGEFSEAREDLAALEKDYEEVGAEGGDDEDDEGEEY</sequence>
<proteinExistence type="evidence at transcript level"/>
<feature type="chain" id="PRO_0000048137" description="Tubulin alpha-2 chain">
    <location>
        <begin position="1"/>
        <end position="450"/>
    </location>
</feature>
<feature type="region of interest" description="Disordered" evidence="4">
    <location>
        <begin position="430"/>
        <end position="450"/>
    </location>
</feature>
<feature type="compositionally biased region" description="Acidic residues" evidence="4">
    <location>
        <begin position="431"/>
        <end position="450"/>
    </location>
</feature>
<feature type="active site" evidence="2">
    <location>
        <position position="254"/>
    </location>
</feature>
<feature type="binding site" evidence="2">
    <location>
        <position position="11"/>
    </location>
    <ligand>
        <name>GTP</name>
        <dbReference type="ChEBI" id="CHEBI:37565"/>
    </ligand>
</feature>
<feature type="binding site" evidence="2">
    <location>
        <position position="71"/>
    </location>
    <ligand>
        <name>GTP</name>
        <dbReference type="ChEBI" id="CHEBI:37565"/>
    </ligand>
</feature>
<feature type="binding site" evidence="2">
    <location>
        <position position="71"/>
    </location>
    <ligand>
        <name>Mg(2+)</name>
        <dbReference type="ChEBI" id="CHEBI:18420"/>
    </ligand>
</feature>
<feature type="binding site" evidence="2">
    <location>
        <position position="144"/>
    </location>
    <ligand>
        <name>GTP</name>
        <dbReference type="ChEBI" id="CHEBI:37565"/>
    </ligand>
</feature>
<feature type="binding site" evidence="2">
    <location>
        <position position="145"/>
    </location>
    <ligand>
        <name>GTP</name>
        <dbReference type="ChEBI" id="CHEBI:37565"/>
    </ligand>
</feature>
<feature type="binding site" evidence="2">
    <location>
        <position position="179"/>
    </location>
    <ligand>
        <name>GTP</name>
        <dbReference type="ChEBI" id="CHEBI:37565"/>
    </ligand>
</feature>
<feature type="binding site" evidence="2">
    <location>
        <position position="206"/>
    </location>
    <ligand>
        <name>GTP</name>
        <dbReference type="ChEBI" id="CHEBI:37565"/>
    </ligand>
</feature>
<feature type="binding site" evidence="2">
    <location>
        <position position="228"/>
    </location>
    <ligand>
        <name>GTP</name>
        <dbReference type="ChEBI" id="CHEBI:37565"/>
    </ligand>
</feature>
<feature type="site" description="Involved in polymerization">
    <location>
        <position position="450"/>
    </location>
</feature>
<feature type="modified residue" description="Phosphothreonine" evidence="3">
    <location>
        <position position="349"/>
    </location>
</feature>
<gene>
    <name type="primary">TUBA2</name>
    <name type="synonym">TUA2</name>
    <name type="ordered locus">At1g50010</name>
    <name type="ORF">F2J10.11</name>
</gene>
<dbReference type="EC" id="3.6.5.-" evidence="2"/>
<dbReference type="EMBL" id="M84696">
    <property type="protein sequence ID" value="AAA32889.1"/>
    <property type="molecule type" value="Genomic_DNA"/>
</dbReference>
<dbReference type="EMBL" id="AC015445">
    <property type="protein sequence ID" value="AAF76449.1"/>
    <property type="molecule type" value="Genomic_DNA"/>
</dbReference>
<dbReference type="EMBL" id="CP002684">
    <property type="protein sequence ID" value="AEE32507.1"/>
    <property type="molecule type" value="Genomic_DNA"/>
</dbReference>
<dbReference type="EMBL" id="AF410330">
    <property type="protein sequence ID" value="AAK95316.1"/>
    <property type="molecule type" value="mRNA"/>
</dbReference>
<dbReference type="EMBL" id="AY065117">
    <property type="protein sequence ID" value="AAL38293.1"/>
    <property type="molecule type" value="mRNA"/>
</dbReference>
<dbReference type="EMBL" id="AY149922">
    <property type="protein sequence ID" value="AAN31076.1"/>
    <property type="molecule type" value="mRNA"/>
</dbReference>
<dbReference type="EMBL" id="AK317278">
    <property type="protein sequence ID" value="BAH19954.1"/>
    <property type="molecule type" value="mRNA"/>
</dbReference>
<dbReference type="PIR" id="JQ1594">
    <property type="entry name" value="JQ1594"/>
</dbReference>
<dbReference type="RefSeq" id="NP_175423.1">
    <property type="nucleotide sequence ID" value="NM_103889.3"/>
</dbReference>
<dbReference type="SMR" id="B9DGT7"/>
<dbReference type="BioGRID" id="24640">
    <property type="interactions" value="8"/>
</dbReference>
<dbReference type="BioGRID" id="26650">
    <property type="interactions" value="4"/>
</dbReference>
<dbReference type="FunCoup" id="B9DGT7">
    <property type="interactions" value="1425"/>
</dbReference>
<dbReference type="STRING" id="3702.B9DGT7"/>
<dbReference type="iPTMnet" id="B9DGT7"/>
<dbReference type="PaxDb" id="3702-AT1G04820.1"/>
<dbReference type="EnsemblPlants" id="AT1G04820.1">
    <property type="protein sequence ID" value="AT1G04820.1"/>
    <property type="gene ID" value="AT1G04820"/>
</dbReference>
<dbReference type="EnsemblPlants" id="AT1G50010.1">
    <property type="protein sequence ID" value="AT1G50010.1"/>
    <property type="gene ID" value="AT1G50010"/>
</dbReference>
<dbReference type="GeneID" id="841425"/>
<dbReference type="Gramene" id="AT1G04820.1">
    <property type="protein sequence ID" value="AT1G04820.1"/>
    <property type="gene ID" value="AT1G04820"/>
</dbReference>
<dbReference type="Gramene" id="AT1G50010.1">
    <property type="protein sequence ID" value="AT1G50010.1"/>
    <property type="gene ID" value="AT1G50010"/>
</dbReference>
<dbReference type="KEGG" id="ath:AT1G04820"/>
<dbReference type="KEGG" id="ath:AT1G50010"/>
<dbReference type="Araport" id="AT1G50010"/>
<dbReference type="TAIR" id="AT1G50010">
    <property type="gene designation" value="TUA2"/>
</dbReference>
<dbReference type="eggNOG" id="KOG1376">
    <property type="taxonomic scope" value="Eukaryota"/>
</dbReference>
<dbReference type="HOGENOM" id="CLU_015718_0_0_1"/>
<dbReference type="InParanoid" id="B9DGT7"/>
<dbReference type="OMA" id="PEGTHIN"/>
<dbReference type="OrthoDB" id="1514140at2759"/>
<dbReference type="PhylomeDB" id="B9DGT7"/>
<dbReference type="PRO" id="PR:B9DGT7"/>
<dbReference type="Proteomes" id="UP000006548">
    <property type="component" value="Chromosome 1"/>
</dbReference>
<dbReference type="ExpressionAtlas" id="B9DGT7">
    <property type="expression patterns" value="baseline and differential"/>
</dbReference>
<dbReference type="GO" id="GO:0005737">
    <property type="term" value="C:cytoplasm"/>
    <property type="evidence" value="ECO:0007669"/>
    <property type="project" value="UniProtKB-KW"/>
</dbReference>
<dbReference type="GO" id="GO:0005874">
    <property type="term" value="C:microtubule"/>
    <property type="evidence" value="ECO:0007669"/>
    <property type="project" value="UniProtKB-KW"/>
</dbReference>
<dbReference type="GO" id="GO:0005525">
    <property type="term" value="F:GTP binding"/>
    <property type="evidence" value="ECO:0007669"/>
    <property type="project" value="UniProtKB-KW"/>
</dbReference>
<dbReference type="GO" id="GO:0016787">
    <property type="term" value="F:hydrolase activity"/>
    <property type="evidence" value="ECO:0007669"/>
    <property type="project" value="UniProtKB-KW"/>
</dbReference>
<dbReference type="GO" id="GO:0046872">
    <property type="term" value="F:metal ion binding"/>
    <property type="evidence" value="ECO:0007669"/>
    <property type="project" value="UniProtKB-KW"/>
</dbReference>
<dbReference type="GO" id="GO:0005200">
    <property type="term" value="F:structural constituent of cytoskeleton"/>
    <property type="evidence" value="ECO:0007669"/>
    <property type="project" value="InterPro"/>
</dbReference>
<dbReference type="GO" id="GO:0007017">
    <property type="term" value="P:microtubule-based process"/>
    <property type="evidence" value="ECO:0007669"/>
    <property type="project" value="InterPro"/>
</dbReference>
<dbReference type="CDD" id="cd02186">
    <property type="entry name" value="alpha_tubulin"/>
    <property type="match status" value="1"/>
</dbReference>
<dbReference type="FunFam" id="1.10.287.600:FF:000005">
    <property type="entry name" value="Tubulin alpha chain"/>
    <property type="match status" value="1"/>
</dbReference>
<dbReference type="FunFam" id="3.30.1330.20:FF:000001">
    <property type="entry name" value="Tubulin alpha chain"/>
    <property type="match status" value="1"/>
</dbReference>
<dbReference type="FunFam" id="3.40.50.1440:FF:000004">
    <property type="entry name" value="Tubulin alpha chain"/>
    <property type="match status" value="1"/>
</dbReference>
<dbReference type="Gene3D" id="1.10.287.600">
    <property type="entry name" value="Helix hairpin bin"/>
    <property type="match status" value="1"/>
</dbReference>
<dbReference type="Gene3D" id="3.30.1330.20">
    <property type="entry name" value="Tubulin/FtsZ, C-terminal domain"/>
    <property type="match status" value="1"/>
</dbReference>
<dbReference type="Gene3D" id="3.40.50.1440">
    <property type="entry name" value="Tubulin/FtsZ, GTPase domain"/>
    <property type="match status" value="1"/>
</dbReference>
<dbReference type="InterPro" id="IPR002452">
    <property type="entry name" value="Alpha_tubulin"/>
</dbReference>
<dbReference type="InterPro" id="IPR008280">
    <property type="entry name" value="Tub_FtsZ_C"/>
</dbReference>
<dbReference type="InterPro" id="IPR000217">
    <property type="entry name" value="Tubulin"/>
</dbReference>
<dbReference type="InterPro" id="IPR037103">
    <property type="entry name" value="Tubulin/FtsZ-like_C"/>
</dbReference>
<dbReference type="InterPro" id="IPR018316">
    <property type="entry name" value="Tubulin/FtsZ_2-layer-sand-dom"/>
</dbReference>
<dbReference type="InterPro" id="IPR036525">
    <property type="entry name" value="Tubulin/FtsZ_GTPase_sf"/>
</dbReference>
<dbReference type="InterPro" id="IPR023123">
    <property type="entry name" value="Tubulin_C"/>
</dbReference>
<dbReference type="InterPro" id="IPR017975">
    <property type="entry name" value="Tubulin_CS"/>
</dbReference>
<dbReference type="InterPro" id="IPR003008">
    <property type="entry name" value="Tubulin_FtsZ_GTPase"/>
</dbReference>
<dbReference type="PANTHER" id="PTHR11588">
    <property type="entry name" value="TUBULIN"/>
    <property type="match status" value="1"/>
</dbReference>
<dbReference type="Pfam" id="PF00091">
    <property type="entry name" value="Tubulin"/>
    <property type="match status" value="1"/>
</dbReference>
<dbReference type="Pfam" id="PF03953">
    <property type="entry name" value="Tubulin_C"/>
    <property type="match status" value="1"/>
</dbReference>
<dbReference type="PRINTS" id="PR01162">
    <property type="entry name" value="ALPHATUBULIN"/>
</dbReference>
<dbReference type="PRINTS" id="PR01161">
    <property type="entry name" value="TUBULIN"/>
</dbReference>
<dbReference type="SMART" id="SM00864">
    <property type="entry name" value="Tubulin"/>
    <property type="match status" value="1"/>
</dbReference>
<dbReference type="SMART" id="SM00865">
    <property type="entry name" value="Tubulin_C"/>
    <property type="match status" value="1"/>
</dbReference>
<dbReference type="SUPFAM" id="SSF55307">
    <property type="entry name" value="Tubulin C-terminal domain-like"/>
    <property type="match status" value="1"/>
</dbReference>
<dbReference type="SUPFAM" id="SSF52490">
    <property type="entry name" value="Tubulin nucleotide-binding domain-like"/>
    <property type="match status" value="1"/>
</dbReference>
<dbReference type="PROSITE" id="PS00227">
    <property type="entry name" value="TUBULIN"/>
    <property type="match status" value="1"/>
</dbReference>
<evidence type="ECO:0000250" key="1"/>
<evidence type="ECO:0000250" key="2">
    <source>
        <dbReference type="UniProtKB" id="P68363"/>
    </source>
</evidence>
<evidence type="ECO:0000250" key="3">
    <source>
        <dbReference type="UniProtKB" id="Q56WH1"/>
    </source>
</evidence>
<evidence type="ECO:0000256" key="4">
    <source>
        <dbReference type="SAM" id="MobiDB-lite"/>
    </source>
</evidence>
<evidence type="ECO:0000305" key="5"/>
<reference key="1">
    <citation type="journal article" date="1992" name="Plant Cell">
        <title>The small genome of Arabidopsis contains at least six expressed alpha-tubulin genes.</title>
        <authorList>
            <person name="Kopczak S.D."/>
            <person name="Haas N.A."/>
            <person name="Hussey P.J."/>
            <person name="Silflow C.D."/>
            <person name="Snustad D.P."/>
        </authorList>
    </citation>
    <scope>NUCLEOTIDE SEQUENCE [GENOMIC DNA]</scope>
    <source>
        <strain>cv. Columbia</strain>
    </source>
</reference>
<reference key="2">
    <citation type="journal article" date="2000" name="Nature">
        <title>Sequence and analysis of chromosome 1 of the plant Arabidopsis thaliana.</title>
        <authorList>
            <person name="Theologis A."/>
            <person name="Ecker J.R."/>
            <person name="Palm C.J."/>
            <person name="Federspiel N.A."/>
            <person name="Kaul S."/>
            <person name="White O."/>
            <person name="Alonso J."/>
            <person name="Altafi H."/>
            <person name="Araujo R."/>
            <person name="Bowman C.L."/>
            <person name="Brooks S.Y."/>
            <person name="Buehler E."/>
            <person name="Chan A."/>
            <person name="Chao Q."/>
            <person name="Chen H."/>
            <person name="Cheuk R.F."/>
            <person name="Chin C.W."/>
            <person name="Chung M.K."/>
            <person name="Conn L."/>
            <person name="Conway A.B."/>
            <person name="Conway A.R."/>
            <person name="Creasy T.H."/>
            <person name="Dewar K."/>
            <person name="Dunn P."/>
            <person name="Etgu P."/>
            <person name="Feldblyum T.V."/>
            <person name="Feng J.-D."/>
            <person name="Fong B."/>
            <person name="Fujii C.Y."/>
            <person name="Gill J.E."/>
            <person name="Goldsmith A.D."/>
            <person name="Haas B."/>
            <person name="Hansen N.F."/>
            <person name="Hughes B."/>
            <person name="Huizar L."/>
            <person name="Hunter J.L."/>
            <person name="Jenkins J."/>
            <person name="Johnson-Hopson C."/>
            <person name="Khan S."/>
            <person name="Khaykin E."/>
            <person name="Kim C.J."/>
            <person name="Koo H.L."/>
            <person name="Kremenetskaia I."/>
            <person name="Kurtz D.B."/>
            <person name="Kwan A."/>
            <person name="Lam B."/>
            <person name="Langin-Hooper S."/>
            <person name="Lee A."/>
            <person name="Lee J.M."/>
            <person name="Lenz C.A."/>
            <person name="Li J.H."/>
            <person name="Li Y.-P."/>
            <person name="Lin X."/>
            <person name="Liu S.X."/>
            <person name="Liu Z.A."/>
            <person name="Luros J.S."/>
            <person name="Maiti R."/>
            <person name="Marziali A."/>
            <person name="Militscher J."/>
            <person name="Miranda M."/>
            <person name="Nguyen M."/>
            <person name="Nierman W.C."/>
            <person name="Osborne B.I."/>
            <person name="Pai G."/>
            <person name="Peterson J."/>
            <person name="Pham P.K."/>
            <person name="Rizzo M."/>
            <person name="Rooney T."/>
            <person name="Rowley D."/>
            <person name="Sakano H."/>
            <person name="Salzberg S.L."/>
            <person name="Schwartz J.R."/>
            <person name="Shinn P."/>
            <person name="Southwick A.M."/>
            <person name="Sun H."/>
            <person name="Tallon L.J."/>
            <person name="Tambunga G."/>
            <person name="Toriumi M.J."/>
            <person name="Town C.D."/>
            <person name="Utterback T."/>
            <person name="Van Aken S."/>
            <person name="Vaysberg M."/>
            <person name="Vysotskaia V.S."/>
            <person name="Walker M."/>
            <person name="Wu D."/>
            <person name="Yu G."/>
            <person name="Fraser C.M."/>
            <person name="Venter J.C."/>
            <person name="Davis R.W."/>
        </authorList>
    </citation>
    <scope>NUCLEOTIDE SEQUENCE [LARGE SCALE GENOMIC DNA]</scope>
    <source>
        <strain>cv. Columbia</strain>
    </source>
</reference>
<reference key="3">
    <citation type="journal article" date="2017" name="Plant J.">
        <title>Araport11: a complete reannotation of the Arabidopsis thaliana reference genome.</title>
        <authorList>
            <person name="Cheng C.Y."/>
            <person name="Krishnakumar V."/>
            <person name="Chan A.P."/>
            <person name="Thibaud-Nissen F."/>
            <person name="Schobel S."/>
            <person name="Town C.D."/>
        </authorList>
    </citation>
    <scope>GENOME REANNOTATION</scope>
    <source>
        <strain>cv. Columbia</strain>
    </source>
</reference>
<reference key="4">
    <citation type="journal article" date="2003" name="Science">
        <title>Empirical analysis of transcriptional activity in the Arabidopsis genome.</title>
        <authorList>
            <person name="Yamada K."/>
            <person name="Lim J."/>
            <person name="Dale J.M."/>
            <person name="Chen H."/>
            <person name="Shinn P."/>
            <person name="Palm C.J."/>
            <person name="Southwick A.M."/>
            <person name="Wu H.C."/>
            <person name="Kim C.J."/>
            <person name="Nguyen M."/>
            <person name="Pham P.K."/>
            <person name="Cheuk R.F."/>
            <person name="Karlin-Newmann G."/>
            <person name="Liu S.X."/>
            <person name="Lam B."/>
            <person name="Sakano H."/>
            <person name="Wu T."/>
            <person name="Yu G."/>
            <person name="Miranda M."/>
            <person name="Quach H.L."/>
            <person name="Tripp M."/>
            <person name="Chang C.H."/>
            <person name="Lee J.M."/>
            <person name="Toriumi M.J."/>
            <person name="Chan M.M."/>
            <person name="Tang C.C."/>
            <person name="Onodera C.S."/>
            <person name="Deng J.M."/>
            <person name="Akiyama K."/>
            <person name="Ansari Y."/>
            <person name="Arakawa T."/>
            <person name="Banh J."/>
            <person name="Banno F."/>
            <person name="Bowser L."/>
            <person name="Brooks S.Y."/>
            <person name="Carninci P."/>
            <person name="Chao Q."/>
            <person name="Choy N."/>
            <person name="Enju A."/>
            <person name="Goldsmith A.D."/>
            <person name="Gurjal M."/>
            <person name="Hansen N.F."/>
            <person name="Hayashizaki Y."/>
            <person name="Johnson-Hopson C."/>
            <person name="Hsuan V.W."/>
            <person name="Iida K."/>
            <person name="Karnes M."/>
            <person name="Khan S."/>
            <person name="Koesema E."/>
            <person name="Ishida J."/>
            <person name="Jiang P.X."/>
            <person name="Jones T."/>
            <person name="Kawai J."/>
            <person name="Kamiya A."/>
            <person name="Meyers C."/>
            <person name="Nakajima M."/>
            <person name="Narusaka M."/>
            <person name="Seki M."/>
            <person name="Sakurai T."/>
            <person name="Satou M."/>
            <person name="Tamse R."/>
            <person name="Vaysberg M."/>
            <person name="Wallender E.K."/>
            <person name="Wong C."/>
            <person name="Yamamura Y."/>
            <person name="Yuan S."/>
            <person name="Shinozaki K."/>
            <person name="Davis R.W."/>
            <person name="Theologis A."/>
            <person name="Ecker J.R."/>
        </authorList>
    </citation>
    <scope>NUCLEOTIDE SEQUENCE [LARGE SCALE MRNA]</scope>
    <source>
        <strain>cv. Columbia</strain>
    </source>
</reference>
<reference key="5">
    <citation type="journal article" date="2009" name="DNA Res.">
        <title>Analysis of multiple occurrences of alternative splicing events in Arabidopsis thaliana using novel sequenced full-length cDNAs.</title>
        <authorList>
            <person name="Iida K."/>
            <person name="Fukami-Kobayashi K."/>
            <person name="Toyoda A."/>
            <person name="Sakaki Y."/>
            <person name="Kobayashi M."/>
            <person name="Seki M."/>
            <person name="Shinozaki K."/>
        </authorList>
    </citation>
    <scope>NUCLEOTIDE SEQUENCE [LARGE SCALE MRNA] OF 203-450</scope>
    <source>
        <strain>cv. Columbia</strain>
    </source>
</reference>
<keyword id="KW-0007">Acetylation</keyword>
<keyword id="KW-0963">Cytoplasm</keyword>
<keyword id="KW-0206">Cytoskeleton</keyword>
<keyword id="KW-0342">GTP-binding</keyword>
<keyword id="KW-0378">Hydrolase</keyword>
<keyword id="KW-0460">Magnesium</keyword>
<keyword id="KW-0479">Metal-binding</keyword>
<keyword id="KW-0493">Microtubule</keyword>
<keyword id="KW-0547">Nucleotide-binding</keyword>
<keyword id="KW-0597">Phosphoprotein</keyword>
<keyword id="KW-1185">Reference proteome</keyword>
<protein>
    <recommendedName>
        <fullName>Tubulin alpha-2 chain</fullName>
        <ecNumber evidence="2">3.6.5.-</ecNumber>
    </recommendedName>
</protein>
<organism>
    <name type="scientific">Arabidopsis thaliana</name>
    <name type="common">Mouse-ear cress</name>
    <dbReference type="NCBI Taxonomy" id="3702"/>
    <lineage>
        <taxon>Eukaryota</taxon>
        <taxon>Viridiplantae</taxon>
        <taxon>Streptophyta</taxon>
        <taxon>Embryophyta</taxon>
        <taxon>Tracheophyta</taxon>
        <taxon>Spermatophyta</taxon>
        <taxon>Magnoliopsida</taxon>
        <taxon>eudicotyledons</taxon>
        <taxon>Gunneridae</taxon>
        <taxon>Pentapetalae</taxon>
        <taxon>rosids</taxon>
        <taxon>malvids</taxon>
        <taxon>Brassicales</taxon>
        <taxon>Brassicaceae</taxon>
        <taxon>Camelineae</taxon>
        <taxon>Arabidopsis</taxon>
    </lineage>
</organism>
<name>TBA2_ARATH</name>